<accession>P18769</accession>
<organism>
    <name type="scientific">Myxococcus xanthus</name>
    <dbReference type="NCBI Taxonomy" id="34"/>
    <lineage>
        <taxon>Bacteria</taxon>
        <taxon>Pseudomonadati</taxon>
        <taxon>Myxococcota</taxon>
        <taxon>Myxococcia</taxon>
        <taxon>Myxococcales</taxon>
        <taxon>Cystobacterineae</taxon>
        <taxon>Myxococcaceae</taxon>
        <taxon>Myxococcus</taxon>
    </lineage>
</organism>
<name>FRZE_MYXXA</name>
<proteinExistence type="evidence at protein level"/>
<dbReference type="EC" id="2.7.13.3"/>
<dbReference type="EMBL" id="M35192">
    <property type="protein sequence ID" value="AAA25396.1"/>
    <property type="molecule type" value="Genomic_DNA"/>
</dbReference>
<dbReference type="PIR" id="A35966">
    <property type="entry name" value="A35966"/>
</dbReference>
<dbReference type="RefSeq" id="WP_011554143.1">
    <property type="nucleotide sequence ID" value="NZ_FNOH01000003.1"/>
</dbReference>
<dbReference type="SMR" id="P18769"/>
<dbReference type="OMA" id="LEMPRMH"/>
<dbReference type="BRENDA" id="2.7.13.3">
    <property type="organism ID" value="3551"/>
</dbReference>
<dbReference type="GO" id="GO:0005524">
    <property type="term" value="F:ATP binding"/>
    <property type="evidence" value="ECO:0007669"/>
    <property type="project" value="UniProtKB-KW"/>
</dbReference>
<dbReference type="GO" id="GO:0004673">
    <property type="term" value="F:protein histidine kinase activity"/>
    <property type="evidence" value="ECO:0007669"/>
    <property type="project" value="UniProtKB-EC"/>
</dbReference>
<dbReference type="GO" id="GO:0006935">
    <property type="term" value="P:chemotaxis"/>
    <property type="evidence" value="ECO:0007669"/>
    <property type="project" value="InterPro"/>
</dbReference>
<dbReference type="GO" id="GO:0000160">
    <property type="term" value="P:phosphorelay signal transduction system"/>
    <property type="evidence" value="ECO:0007669"/>
    <property type="project" value="UniProtKB-KW"/>
</dbReference>
<dbReference type="CDD" id="cd00731">
    <property type="entry name" value="CheA_reg"/>
    <property type="match status" value="1"/>
</dbReference>
<dbReference type="CDD" id="cd16916">
    <property type="entry name" value="HATPase_CheA-like"/>
    <property type="match status" value="1"/>
</dbReference>
<dbReference type="CDD" id="cd00088">
    <property type="entry name" value="HPT"/>
    <property type="match status" value="1"/>
</dbReference>
<dbReference type="FunFam" id="3.30.565.10:FF:000016">
    <property type="entry name" value="Chemotaxis protein CheA, putative"/>
    <property type="match status" value="1"/>
</dbReference>
<dbReference type="FunFam" id="1.20.120.160:FF:000023">
    <property type="entry name" value="Gliding motility regulatory protein"/>
    <property type="match status" value="1"/>
</dbReference>
<dbReference type="FunFam" id="3.40.50.2300:FF:000462">
    <property type="entry name" value="Signal transduction histidine kinase CheA"/>
    <property type="match status" value="1"/>
</dbReference>
<dbReference type="Gene3D" id="3.40.50.2300">
    <property type="match status" value="1"/>
</dbReference>
<dbReference type="Gene3D" id="3.30.565.10">
    <property type="entry name" value="Histidine kinase-like ATPase, C-terminal domain"/>
    <property type="match status" value="1"/>
</dbReference>
<dbReference type="Gene3D" id="1.20.120.160">
    <property type="entry name" value="HPT domain"/>
    <property type="match status" value="1"/>
</dbReference>
<dbReference type="Gene3D" id="2.30.30.40">
    <property type="entry name" value="SH3 Domains"/>
    <property type="match status" value="1"/>
</dbReference>
<dbReference type="InterPro" id="IPR051315">
    <property type="entry name" value="Bact_Chemotaxis_CheA"/>
</dbReference>
<dbReference type="InterPro" id="IPR036061">
    <property type="entry name" value="CheW-like_dom_sf"/>
</dbReference>
<dbReference type="InterPro" id="IPR002545">
    <property type="entry name" value="CheW-lke_dom"/>
</dbReference>
<dbReference type="InterPro" id="IPR011006">
    <property type="entry name" value="CheY-like_superfamily"/>
</dbReference>
<dbReference type="InterPro" id="IPR036890">
    <property type="entry name" value="HATPase_C_sf"/>
</dbReference>
<dbReference type="InterPro" id="IPR005467">
    <property type="entry name" value="His_kinase_dom"/>
</dbReference>
<dbReference type="InterPro" id="IPR036641">
    <property type="entry name" value="HPT_dom_sf"/>
</dbReference>
<dbReference type="InterPro" id="IPR004358">
    <property type="entry name" value="Sig_transdc_His_kin-like_C"/>
</dbReference>
<dbReference type="InterPro" id="IPR008207">
    <property type="entry name" value="Sig_transdc_His_kin_Hpt_dom"/>
</dbReference>
<dbReference type="InterPro" id="IPR001789">
    <property type="entry name" value="Sig_transdc_resp-reg_receiver"/>
</dbReference>
<dbReference type="PANTHER" id="PTHR43395:SF1">
    <property type="entry name" value="CHEMOTAXIS PROTEIN CHEA"/>
    <property type="match status" value="1"/>
</dbReference>
<dbReference type="PANTHER" id="PTHR43395">
    <property type="entry name" value="SENSOR HISTIDINE KINASE CHEA"/>
    <property type="match status" value="1"/>
</dbReference>
<dbReference type="Pfam" id="PF01584">
    <property type="entry name" value="CheW"/>
    <property type="match status" value="1"/>
</dbReference>
<dbReference type="Pfam" id="PF02518">
    <property type="entry name" value="HATPase_c"/>
    <property type="match status" value="1"/>
</dbReference>
<dbReference type="Pfam" id="PF01627">
    <property type="entry name" value="Hpt"/>
    <property type="match status" value="1"/>
</dbReference>
<dbReference type="Pfam" id="PF00072">
    <property type="entry name" value="Response_reg"/>
    <property type="match status" value="1"/>
</dbReference>
<dbReference type="PRINTS" id="PR00344">
    <property type="entry name" value="BCTRLSENSOR"/>
</dbReference>
<dbReference type="SMART" id="SM00260">
    <property type="entry name" value="CheW"/>
    <property type="match status" value="1"/>
</dbReference>
<dbReference type="SMART" id="SM00387">
    <property type="entry name" value="HATPase_c"/>
    <property type="match status" value="1"/>
</dbReference>
<dbReference type="SMART" id="SM00073">
    <property type="entry name" value="HPT"/>
    <property type="match status" value="1"/>
</dbReference>
<dbReference type="SMART" id="SM00448">
    <property type="entry name" value="REC"/>
    <property type="match status" value="1"/>
</dbReference>
<dbReference type="SUPFAM" id="SSF55874">
    <property type="entry name" value="ATPase domain of HSP90 chaperone/DNA topoisomerase II/histidine kinase"/>
    <property type="match status" value="1"/>
</dbReference>
<dbReference type="SUPFAM" id="SSF50341">
    <property type="entry name" value="CheW-like"/>
    <property type="match status" value="1"/>
</dbReference>
<dbReference type="SUPFAM" id="SSF52172">
    <property type="entry name" value="CheY-like"/>
    <property type="match status" value="1"/>
</dbReference>
<dbReference type="SUPFAM" id="SSF47226">
    <property type="entry name" value="Histidine-containing phosphotransfer domain, HPT domain"/>
    <property type="match status" value="1"/>
</dbReference>
<dbReference type="PROSITE" id="PS50851">
    <property type="entry name" value="CHEW"/>
    <property type="match status" value="1"/>
</dbReference>
<dbReference type="PROSITE" id="PS50109">
    <property type="entry name" value="HIS_KIN"/>
    <property type="match status" value="1"/>
</dbReference>
<dbReference type="PROSITE" id="PS50894">
    <property type="entry name" value="HPT"/>
    <property type="match status" value="1"/>
</dbReference>
<dbReference type="PROSITE" id="PS50110">
    <property type="entry name" value="RESPONSE_REGULATORY"/>
    <property type="match status" value="1"/>
</dbReference>
<comment type="function">
    <text>FrzE is involved in a sensory transduction pathway that controls the frequency at which cells reverse their gliding direction. FrzE seems to be capable of autophosphorylating itself on a histidine residue and then to transfer that group to an aspartate residue in the C-terminal part of the protein.</text>
</comment>
<comment type="catalytic activity">
    <reaction>
        <text>ATP + protein L-histidine = ADP + protein N-phospho-L-histidine.</text>
        <dbReference type="EC" id="2.7.13.3"/>
    </reaction>
</comment>
<reference key="1">
    <citation type="journal article" date="1990" name="Proc. Natl. Acad. Sci. U.S.A.">
        <title>FrzE of Myxococcus xanthus is homologous to both CheA and CheY of Salmonella typhimurium.</title>
        <authorList>
            <person name="McCleary W.R."/>
            <person name="Zusman D.R."/>
        </authorList>
    </citation>
    <scope>NUCLEOTIDE SEQUENCE [GENOMIC DNA]</scope>
</reference>
<reference key="2">
    <citation type="journal article" date="1990" name="J. Bacteriol.">
        <title>Purification and characterization of the Myxococcus xanthus FrzE protein shows that it has autophosphorylation activity.</title>
        <authorList>
            <person name="McCleary W.R."/>
            <person name="Zusman D.R."/>
        </authorList>
    </citation>
    <scope>PHOSPHORYLATION AT HIS-49</scope>
</reference>
<protein>
    <recommendedName>
        <fullName>Gliding motility regulatory protein</fullName>
        <ecNumber>2.7.13.3</ecNumber>
    </recommendedName>
</protein>
<feature type="chain" id="PRO_0000074766" description="Gliding motility regulatory protein">
    <location>
        <begin position="1"/>
        <end position="777"/>
    </location>
</feature>
<feature type="domain" description="HPt" evidence="3">
    <location>
        <begin position="1"/>
        <end position="108"/>
    </location>
</feature>
<feature type="domain" description="Histidine kinase" evidence="2">
    <location>
        <begin position="270"/>
        <end position="509"/>
    </location>
</feature>
<feature type="domain" description="CheW-like" evidence="1">
    <location>
        <begin position="511"/>
        <end position="645"/>
    </location>
</feature>
<feature type="domain" description="Response regulatory" evidence="4">
    <location>
        <begin position="660"/>
        <end position="776"/>
    </location>
</feature>
<feature type="region of interest" description="Disordered" evidence="5">
    <location>
        <begin position="129"/>
        <end position="149"/>
    </location>
</feature>
<feature type="region of interest" description="Disordered" evidence="5">
    <location>
        <begin position="164"/>
        <end position="212"/>
    </location>
</feature>
<feature type="compositionally biased region" description="Pro residues" evidence="5">
    <location>
        <begin position="139"/>
        <end position="149"/>
    </location>
</feature>
<feature type="compositionally biased region" description="Pro residues" evidence="5">
    <location>
        <begin position="164"/>
        <end position="177"/>
    </location>
</feature>
<feature type="compositionally biased region" description="Low complexity" evidence="5">
    <location>
        <begin position="178"/>
        <end position="197"/>
    </location>
</feature>
<feature type="modified residue" description="Phosphohistidine; by autocatalysis" evidence="2">
    <location>
        <position position="49"/>
    </location>
</feature>
<feature type="modified residue" description="4-aspartylphosphate" evidence="4">
    <location>
        <position position="709"/>
    </location>
</feature>
<keyword id="KW-0067">ATP-binding</keyword>
<keyword id="KW-0418">Kinase</keyword>
<keyword id="KW-0547">Nucleotide-binding</keyword>
<keyword id="KW-0597">Phosphoprotein</keyword>
<keyword id="KW-0808">Transferase</keyword>
<keyword id="KW-0902">Two-component regulatory system</keyword>
<gene>
    <name type="primary">frzE</name>
</gene>
<evidence type="ECO:0000255" key="1">
    <source>
        <dbReference type="PROSITE-ProRule" id="PRU00052"/>
    </source>
</evidence>
<evidence type="ECO:0000255" key="2">
    <source>
        <dbReference type="PROSITE-ProRule" id="PRU00107"/>
    </source>
</evidence>
<evidence type="ECO:0000255" key="3">
    <source>
        <dbReference type="PROSITE-ProRule" id="PRU00110"/>
    </source>
</evidence>
<evidence type="ECO:0000255" key="4">
    <source>
        <dbReference type="PROSITE-ProRule" id="PRU00169"/>
    </source>
</evidence>
<evidence type="ECO:0000256" key="5">
    <source>
        <dbReference type="SAM" id="MobiDB-lite"/>
    </source>
</evidence>
<sequence>MDTEALKKSLLKKFQEVTADRLQKIQLGVLDLEKETADQAAEDVARELHTMKGEARMLGLAAIGQLAHAAEDVLRAEREGKTATEVATDVLLRACDVLSDLNEDLSGANTGNPASEEMVRMLAEVSGQTPPAIAGARPVAPPPAPPPAPVAAPVVTPAAVAAPPAPVQAPVAPPPTQAPVAEPGAHAAAAAPHPAAAHGRDEEAPSAAKSAVADRSIRVNVEVLDALGLLAGDLLVESARGRLRSSETEALFERFSRLGDRFLRLAEEIDISNEVREQLDRVESDLHMLRDDAFRFVRRNDDGINTLHGNLAKMADHVAEARLVPLSTVFDAFPRAVREMSRTQGKEVDLVIENADIGVDRSMLGDVRDALVHLLRNSVDHGVESPDTRQQLGKPLNGRIRIRVRVDGDMLHIEVEDDGRGIDPERLRQAAISKRLINAVQAAALSEREAIELIFRPGFSTRDQVSELSGRGVGMDVVKRKVETLGGSVGVSSRIGRGSTITLRLPQSLALMKVLLVRLGDDVYGMPAADVEAVMRVKPDDRLEIFGTLAVRHRGKPTALVALGPLLGLNGGNRFDKPPAVVVRHGEDHAALVVDGFVDEREVAVKPCGGEFLKAAPFIAGTAALEDGRIAVLLHVPDIMAEVRRMARPVTQAPAAKRLRVLLVDDSPIARATEGALVKALGHSVEEAQDGEEAYVKVQNNTYDLILTDVQMPKLDGFSLARRLKSTPAVARIPVIILSSLASPEDKRRGLDAGADAYLVKGELGVEVLAQAIDRLT</sequence>